<dbReference type="EC" id="4.3.2.1" evidence="1"/>
<dbReference type="EMBL" id="CP000283">
    <property type="protein sequence ID" value="ABE38174.1"/>
    <property type="molecule type" value="Genomic_DNA"/>
</dbReference>
<dbReference type="SMR" id="Q13CL5"/>
<dbReference type="STRING" id="316057.RPD_0936"/>
<dbReference type="KEGG" id="rpd:RPD_0936"/>
<dbReference type="eggNOG" id="COG0165">
    <property type="taxonomic scope" value="Bacteria"/>
</dbReference>
<dbReference type="HOGENOM" id="CLU_027272_2_3_5"/>
<dbReference type="BioCyc" id="RPAL316057:RPD_RS04755-MONOMER"/>
<dbReference type="UniPathway" id="UPA00068">
    <property type="reaction ID" value="UER00114"/>
</dbReference>
<dbReference type="Proteomes" id="UP000001818">
    <property type="component" value="Chromosome"/>
</dbReference>
<dbReference type="GO" id="GO:0005829">
    <property type="term" value="C:cytosol"/>
    <property type="evidence" value="ECO:0007669"/>
    <property type="project" value="TreeGrafter"/>
</dbReference>
<dbReference type="GO" id="GO:0004056">
    <property type="term" value="F:argininosuccinate lyase activity"/>
    <property type="evidence" value="ECO:0007669"/>
    <property type="project" value="UniProtKB-UniRule"/>
</dbReference>
<dbReference type="GO" id="GO:0042450">
    <property type="term" value="P:arginine biosynthetic process via ornithine"/>
    <property type="evidence" value="ECO:0007669"/>
    <property type="project" value="InterPro"/>
</dbReference>
<dbReference type="GO" id="GO:0006526">
    <property type="term" value="P:L-arginine biosynthetic process"/>
    <property type="evidence" value="ECO:0007669"/>
    <property type="project" value="UniProtKB-UniRule"/>
</dbReference>
<dbReference type="CDD" id="cd01359">
    <property type="entry name" value="Argininosuccinate_lyase"/>
    <property type="match status" value="1"/>
</dbReference>
<dbReference type="FunFam" id="1.10.275.10:FF:000002">
    <property type="entry name" value="Argininosuccinate lyase"/>
    <property type="match status" value="1"/>
</dbReference>
<dbReference type="FunFam" id="1.10.40.30:FF:000001">
    <property type="entry name" value="Argininosuccinate lyase"/>
    <property type="match status" value="1"/>
</dbReference>
<dbReference type="FunFam" id="1.20.200.10:FF:000015">
    <property type="entry name" value="argininosuccinate lyase isoform X2"/>
    <property type="match status" value="1"/>
</dbReference>
<dbReference type="Gene3D" id="1.10.40.30">
    <property type="entry name" value="Fumarase/aspartase (C-terminal domain)"/>
    <property type="match status" value="1"/>
</dbReference>
<dbReference type="Gene3D" id="1.20.200.10">
    <property type="entry name" value="Fumarase/aspartase (Central domain)"/>
    <property type="match status" value="1"/>
</dbReference>
<dbReference type="Gene3D" id="1.10.275.10">
    <property type="entry name" value="Fumarase/aspartase (N-terminal domain)"/>
    <property type="match status" value="1"/>
</dbReference>
<dbReference type="HAMAP" id="MF_00006">
    <property type="entry name" value="Arg_succ_lyase"/>
    <property type="match status" value="1"/>
</dbReference>
<dbReference type="InterPro" id="IPR029419">
    <property type="entry name" value="Arg_succ_lyase_C"/>
</dbReference>
<dbReference type="InterPro" id="IPR009049">
    <property type="entry name" value="Argininosuccinate_lyase"/>
</dbReference>
<dbReference type="InterPro" id="IPR024083">
    <property type="entry name" value="Fumarase/histidase_N"/>
</dbReference>
<dbReference type="InterPro" id="IPR020557">
    <property type="entry name" value="Fumarate_lyase_CS"/>
</dbReference>
<dbReference type="InterPro" id="IPR000362">
    <property type="entry name" value="Fumarate_lyase_fam"/>
</dbReference>
<dbReference type="InterPro" id="IPR022761">
    <property type="entry name" value="Fumarate_lyase_N"/>
</dbReference>
<dbReference type="InterPro" id="IPR008948">
    <property type="entry name" value="L-Aspartase-like"/>
</dbReference>
<dbReference type="NCBIfam" id="TIGR00838">
    <property type="entry name" value="argH"/>
    <property type="match status" value="1"/>
</dbReference>
<dbReference type="PANTHER" id="PTHR43814">
    <property type="entry name" value="ARGININOSUCCINATE LYASE"/>
    <property type="match status" value="1"/>
</dbReference>
<dbReference type="PANTHER" id="PTHR43814:SF1">
    <property type="entry name" value="ARGININOSUCCINATE LYASE"/>
    <property type="match status" value="1"/>
</dbReference>
<dbReference type="Pfam" id="PF14698">
    <property type="entry name" value="ASL_C2"/>
    <property type="match status" value="1"/>
</dbReference>
<dbReference type="Pfam" id="PF00206">
    <property type="entry name" value="Lyase_1"/>
    <property type="match status" value="1"/>
</dbReference>
<dbReference type="PRINTS" id="PR00145">
    <property type="entry name" value="ARGSUCLYASE"/>
</dbReference>
<dbReference type="PRINTS" id="PR00149">
    <property type="entry name" value="FUMRATELYASE"/>
</dbReference>
<dbReference type="SUPFAM" id="SSF48557">
    <property type="entry name" value="L-aspartase-like"/>
    <property type="match status" value="1"/>
</dbReference>
<dbReference type="PROSITE" id="PS00163">
    <property type="entry name" value="FUMARATE_LYASES"/>
    <property type="match status" value="1"/>
</dbReference>
<protein>
    <recommendedName>
        <fullName evidence="1">Argininosuccinate lyase</fullName>
        <shortName evidence="1">ASAL</shortName>
        <ecNumber evidence="1">4.3.2.1</ecNumber>
    </recommendedName>
    <alternativeName>
        <fullName evidence="1">Arginosuccinase</fullName>
    </alternativeName>
</protein>
<comment type="catalytic activity">
    <reaction evidence="1">
        <text>2-(N(omega)-L-arginino)succinate = fumarate + L-arginine</text>
        <dbReference type="Rhea" id="RHEA:24020"/>
        <dbReference type="ChEBI" id="CHEBI:29806"/>
        <dbReference type="ChEBI" id="CHEBI:32682"/>
        <dbReference type="ChEBI" id="CHEBI:57472"/>
        <dbReference type="EC" id="4.3.2.1"/>
    </reaction>
</comment>
<comment type="pathway">
    <text evidence="1">Amino-acid biosynthesis; L-arginine biosynthesis; L-arginine from L-ornithine and carbamoyl phosphate: step 3/3.</text>
</comment>
<comment type="subcellular location">
    <subcellularLocation>
        <location evidence="1">Cytoplasm</location>
    </subcellularLocation>
</comment>
<comment type="similarity">
    <text evidence="1">Belongs to the lyase 1 family. Argininosuccinate lyase subfamily.</text>
</comment>
<reference key="1">
    <citation type="submission" date="2006-03" db="EMBL/GenBank/DDBJ databases">
        <title>Complete sequence of Rhodopseudomonas palustris BisB5.</title>
        <authorList>
            <consortium name="US DOE Joint Genome Institute"/>
            <person name="Copeland A."/>
            <person name="Lucas S."/>
            <person name="Lapidus A."/>
            <person name="Barry K."/>
            <person name="Detter J.C."/>
            <person name="Glavina del Rio T."/>
            <person name="Hammon N."/>
            <person name="Israni S."/>
            <person name="Dalin E."/>
            <person name="Tice H."/>
            <person name="Pitluck S."/>
            <person name="Chain P."/>
            <person name="Malfatti S."/>
            <person name="Shin M."/>
            <person name="Vergez L."/>
            <person name="Schmutz J."/>
            <person name="Larimer F."/>
            <person name="Land M."/>
            <person name="Hauser L."/>
            <person name="Pelletier D.A."/>
            <person name="Kyrpides N."/>
            <person name="Lykidis A."/>
            <person name="Oda Y."/>
            <person name="Harwood C.S."/>
            <person name="Richardson P."/>
        </authorList>
    </citation>
    <scope>NUCLEOTIDE SEQUENCE [LARGE SCALE GENOMIC DNA]</scope>
    <source>
        <strain>BisB5</strain>
    </source>
</reference>
<sequence>MSNKMWGGRFTDRPDAIMEEINVSIDVDRHLYAQDIAASKAHAAMLAAQGIITANDAKNIGKGLDTILSEIGAGKFTFKRALEDIHMNVESRLAELIGPAAGRLHTARSRNDQVATDFRLYVRDVLDETDAALASFQRALVERALEHAETVMPGFTHLQTAQPVTFGHHLMAYVEMAARDRGRFQDARKRLNESPLGAAALAGTSFPIDRHATAKKLGFDRPMANSLDAVSDRDFVLETLSAASICAVHLSRFAEEIVIWTSPLVGLVRLSDKFTTGSSIMPQKRNPDAAELVRAKTGRVIGALNGLLIVMKGLPLAYQKDMQEDKQGAMEGFAALSLAIRAMTGMVRDIVPEQDRMRAAAGEGYATATDLADWLVRTLKMPFRDAHHVTGKIVGLAAKAGVALHELPLKEMQAVEPKISRDALAVLSVESSVKSRTSYGGTAPKNVRAQAKAWLKRLEKEQKLG</sequence>
<organism>
    <name type="scientific">Rhodopseudomonas palustris (strain BisB5)</name>
    <dbReference type="NCBI Taxonomy" id="316057"/>
    <lineage>
        <taxon>Bacteria</taxon>
        <taxon>Pseudomonadati</taxon>
        <taxon>Pseudomonadota</taxon>
        <taxon>Alphaproteobacteria</taxon>
        <taxon>Hyphomicrobiales</taxon>
        <taxon>Nitrobacteraceae</taxon>
        <taxon>Rhodopseudomonas</taxon>
    </lineage>
</organism>
<gene>
    <name evidence="1" type="primary">argH</name>
    <name type="ordered locus">RPD_0936</name>
</gene>
<keyword id="KW-0028">Amino-acid biosynthesis</keyword>
<keyword id="KW-0055">Arginine biosynthesis</keyword>
<keyword id="KW-0963">Cytoplasm</keyword>
<keyword id="KW-0456">Lyase</keyword>
<accession>Q13CL5</accession>
<evidence type="ECO:0000255" key="1">
    <source>
        <dbReference type="HAMAP-Rule" id="MF_00006"/>
    </source>
</evidence>
<feature type="chain" id="PRO_1000000531" description="Argininosuccinate lyase">
    <location>
        <begin position="1"/>
        <end position="465"/>
    </location>
</feature>
<name>ARLY_RHOPS</name>
<proteinExistence type="inferred from homology"/>